<keyword id="KW-1015">Disulfide bond</keyword>
<keyword id="KW-0552">Olfaction</keyword>
<keyword id="KW-1185">Reference proteome</keyword>
<keyword id="KW-0964">Secreted</keyword>
<keyword id="KW-0716">Sensory transduction</keyword>
<keyword id="KW-0732">Signal</keyword>
<keyword id="KW-0813">Transport</keyword>
<dbReference type="EMBL" id="EU088877">
    <property type="protein sequence ID" value="ABW78162.1"/>
    <property type="molecule type" value="Genomic_DNA"/>
</dbReference>
<dbReference type="EMBL" id="EU088878">
    <property type="protein sequence ID" value="ABW78163.1"/>
    <property type="molecule type" value="Genomic_DNA"/>
</dbReference>
<dbReference type="EMBL" id="EU088879">
    <property type="protein sequence ID" value="ABW78164.1"/>
    <property type="molecule type" value="Genomic_DNA"/>
</dbReference>
<dbReference type="EMBL" id="EU088880">
    <property type="protein sequence ID" value="ABW78165.1"/>
    <property type="molecule type" value="Genomic_DNA"/>
</dbReference>
<dbReference type="EMBL" id="EU088881">
    <property type="protein sequence ID" value="ABW78166.1"/>
    <property type="molecule type" value="Genomic_DNA"/>
</dbReference>
<dbReference type="EMBL" id="EU088882">
    <property type="protein sequence ID" value="ABW78167.1"/>
    <property type="molecule type" value="Genomic_DNA"/>
</dbReference>
<dbReference type="EMBL" id="EU088883">
    <property type="protein sequence ID" value="ABW78168.1"/>
    <property type="molecule type" value="Genomic_DNA"/>
</dbReference>
<dbReference type="EMBL" id="EU088884">
    <property type="protein sequence ID" value="ABW78169.1"/>
    <property type="molecule type" value="Genomic_DNA"/>
</dbReference>
<dbReference type="EMBL" id="EU088885">
    <property type="protein sequence ID" value="ABW78170.1"/>
    <property type="molecule type" value="Genomic_DNA"/>
</dbReference>
<dbReference type="EMBL" id="EU088886">
    <property type="protein sequence ID" value="ABW78171.1"/>
    <property type="molecule type" value="Genomic_DNA"/>
</dbReference>
<dbReference type="EMBL" id="EU088887">
    <property type="protein sequence ID" value="ABW78172.1"/>
    <property type="molecule type" value="Genomic_DNA"/>
</dbReference>
<dbReference type="EMBL" id="EU088888">
    <property type="protein sequence ID" value="ABW78173.1"/>
    <property type="molecule type" value="Genomic_DNA"/>
</dbReference>
<dbReference type="EMBL" id="EU088889">
    <property type="protein sequence ID" value="ABW78174.1"/>
    <property type="molecule type" value="Genomic_DNA"/>
</dbReference>
<dbReference type="EMBL" id="EU088890">
    <property type="protein sequence ID" value="ABW78175.1"/>
    <property type="molecule type" value="Genomic_DNA"/>
</dbReference>
<dbReference type="EMBL" id="EU088891">
    <property type="protein sequence ID" value="ABW78176.1"/>
    <property type="molecule type" value="Genomic_DNA"/>
</dbReference>
<dbReference type="EMBL" id="EU088892">
    <property type="protein sequence ID" value="ABW78177.1"/>
    <property type="molecule type" value="Genomic_DNA"/>
</dbReference>
<dbReference type="EMBL" id="EU088893">
    <property type="protein sequence ID" value="ABW78178.1"/>
    <property type="molecule type" value="Genomic_DNA"/>
</dbReference>
<dbReference type="EMBL" id="EU088894">
    <property type="protein sequence ID" value="ABW78179.1"/>
    <property type="molecule type" value="Genomic_DNA"/>
</dbReference>
<dbReference type="EMBL" id="EU088895">
    <property type="protein sequence ID" value="ABW78180.1"/>
    <property type="molecule type" value="Genomic_DNA"/>
</dbReference>
<dbReference type="EMBL" id="EU088896">
    <property type="protein sequence ID" value="ABW78181.1"/>
    <property type="molecule type" value="Genomic_DNA"/>
</dbReference>
<dbReference type="EMBL" id="EU088897">
    <property type="protein sequence ID" value="ABW78182.1"/>
    <property type="molecule type" value="Genomic_DNA"/>
</dbReference>
<dbReference type="EMBL" id="EU088898">
    <property type="protein sequence ID" value="ABW78183.1"/>
    <property type="molecule type" value="Genomic_DNA"/>
</dbReference>
<dbReference type="EMBL" id="EU088899">
    <property type="protein sequence ID" value="ABW78184.1"/>
    <property type="molecule type" value="Genomic_DNA"/>
</dbReference>
<dbReference type="EMBL" id="EU088900">
    <property type="protein sequence ID" value="ABW78185.1"/>
    <property type="molecule type" value="Genomic_DNA"/>
</dbReference>
<dbReference type="EMBL" id="EU088901">
    <property type="protein sequence ID" value="ABW78186.1"/>
    <property type="molecule type" value="Genomic_DNA"/>
</dbReference>
<dbReference type="EMBL" id="EU088902">
    <property type="protein sequence ID" value="ABW78187.1"/>
    <property type="molecule type" value="Genomic_DNA"/>
</dbReference>
<dbReference type="EMBL" id="EU088903">
    <property type="protein sequence ID" value="ABW78188.1"/>
    <property type="molecule type" value="Genomic_DNA"/>
</dbReference>
<dbReference type="EMBL" id="EU088904">
    <property type="protein sequence ID" value="ABW78189.1"/>
    <property type="molecule type" value="Genomic_DNA"/>
</dbReference>
<dbReference type="EMBL" id="EU088905">
    <property type="protein sequence ID" value="ABW78190.1"/>
    <property type="molecule type" value="Genomic_DNA"/>
</dbReference>
<dbReference type="EMBL" id="EU088906">
    <property type="protein sequence ID" value="ABW78191.1"/>
    <property type="molecule type" value="Genomic_DNA"/>
</dbReference>
<dbReference type="EMBL" id="EU088907">
    <property type="protein sequence ID" value="ABW78192.1"/>
    <property type="molecule type" value="Genomic_DNA"/>
</dbReference>
<dbReference type="EMBL" id="EU088908">
    <property type="protein sequence ID" value="ABW78193.1"/>
    <property type="molecule type" value="Genomic_DNA"/>
</dbReference>
<dbReference type="EMBL" id="EU088909">
    <property type="protein sequence ID" value="ABW78194.1"/>
    <property type="molecule type" value="Genomic_DNA"/>
</dbReference>
<dbReference type="EMBL" id="EU088910">
    <property type="protein sequence ID" value="ABW78195.1"/>
    <property type="molecule type" value="Genomic_DNA"/>
</dbReference>
<dbReference type="EMBL" id="EU088911">
    <property type="protein sequence ID" value="ABW78196.1"/>
    <property type="molecule type" value="Genomic_DNA"/>
</dbReference>
<dbReference type="EMBL" id="EU088912">
    <property type="protein sequence ID" value="ABW78197.1"/>
    <property type="molecule type" value="Genomic_DNA"/>
</dbReference>
<dbReference type="EMBL" id="EU088913">
    <property type="protein sequence ID" value="ABW78198.1"/>
    <property type="molecule type" value="Genomic_DNA"/>
</dbReference>
<dbReference type="EMBL" id="EU088914">
    <property type="protein sequence ID" value="ABW78199.1"/>
    <property type="molecule type" value="Genomic_DNA"/>
</dbReference>
<dbReference type="EMBL" id="EU088915">
    <property type="protein sequence ID" value="ABW78200.1"/>
    <property type="molecule type" value="Genomic_DNA"/>
</dbReference>
<dbReference type="EMBL" id="EU088916">
    <property type="protein sequence ID" value="ABW78201.1"/>
    <property type="molecule type" value="Genomic_DNA"/>
</dbReference>
<dbReference type="EMBL" id="EU088917">
    <property type="protein sequence ID" value="ABW78202.1"/>
    <property type="molecule type" value="Genomic_DNA"/>
</dbReference>
<dbReference type="EMBL" id="EU088918">
    <property type="protein sequence ID" value="ABW78203.1"/>
    <property type="molecule type" value="Genomic_DNA"/>
</dbReference>
<dbReference type="EMBL" id="EU088919">
    <property type="protein sequence ID" value="ABW78204.1"/>
    <property type="molecule type" value="Genomic_DNA"/>
</dbReference>
<dbReference type="EMBL" id="EU088920">
    <property type="protein sequence ID" value="ABW78205.1"/>
    <property type="molecule type" value="Genomic_DNA"/>
</dbReference>
<dbReference type="EMBL" id="EU088921">
    <property type="protein sequence ID" value="ABW78206.1"/>
    <property type="molecule type" value="Genomic_DNA"/>
</dbReference>
<dbReference type="EMBL" id="EU088922">
    <property type="protein sequence ID" value="ABW78207.1"/>
    <property type="molecule type" value="Genomic_DNA"/>
</dbReference>
<dbReference type="EMBL" id="EU088923">
    <property type="protein sequence ID" value="ABW78208.1"/>
    <property type="molecule type" value="Genomic_DNA"/>
</dbReference>
<dbReference type="EMBL" id="EU088924">
    <property type="protein sequence ID" value="ABW78209.1"/>
    <property type="molecule type" value="Genomic_DNA"/>
</dbReference>
<dbReference type="EMBL" id="EU088925">
    <property type="protein sequence ID" value="ABW78210.1"/>
    <property type="molecule type" value="Genomic_DNA"/>
</dbReference>
<dbReference type="EMBL" id="EU088926">
    <property type="protein sequence ID" value="ABW78211.1"/>
    <property type="molecule type" value="Genomic_DNA"/>
</dbReference>
<dbReference type="EMBL" id="EU088927">
    <property type="protein sequence ID" value="ABW78212.1"/>
    <property type="molecule type" value="Genomic_DNA"/>
</dbReference>
<dbReference type="EMBL" id="EU088928">
    <property type="protein sequence ID" value="ABW78213.1"/>
    <property type="molecule type" value="Genomic_DNA"/>
</dbReference>
<dbReference type="EMBL" id="EU088929">
    <property type="protein sequence ID" value="ABW78214.1"/>
    <property type="molecule type" value="Genomic_DNA"/>
</dbReference>
<dbReference type="EMBL" id="EU088930">
    <property type="protein sequence ID" value="ABW78215.1"/>
    <property type="molecule type" value="Genomic_DNA"/>
</dbReference>
<dbReference type="EMBL" id="EU088931">
    <property type="protein sequence ID" value="ABW78216.1"/>
    <property type="molecule type" value="Genomic_DNA"/>
</dbReference>
<dbReference type="EMBL" id="EU088932">
    <property type="protein sequence ID" value="ABW78217.1"/>
    <property type="molecule type" value="Genomic_DNA"/>
</dbReference>
<dbReference type="EMBL" id="EU088933">
    <property type="protein sequence ID" value="ABW78218.1"/>
    <property type="molecule type" value="Genomic_DNA"/>
</dbReference>
<dbReference type="EMBL" id="EU088934">
    <property type="protein sequence ID" value="ABW78219.1"/>
    <property type="molecule type" value="Genomic_DNA"/>
</dbReference>
<dbReference type="EMBL" id="EU088935">
    <property type="protein sequence ID" value="ABW78220.1"/>
    <property type="molecule type" value="Genomic_DNA"/>
</dbReference>
<dbReference type="EMBL" id="EU088936">
    <property type="protein sequence ID" value="ABW78221.1"/>
    <property type="molecule type" value="Genomic_DNA"/>
</dbReference>
<dbReference type="EMBL" id="EU088937">
    <property type="protein sequence ID" value="ABW78222.1"/>
    <property type="molecule type" value="Genomic_DNA"/>
</dbReference>
<dbReference type="EMBL" id="EU088938">
    <property type="protein sequence ID" value="ABW78223.1"/>
    <property type="molecule type" value="Genomic_DNA"/>
</dbReference>
<dbReference type="EMBL" id="EU088939">
    <property type="protein sequence ID" value="ABW78224.1"/>
    <property type="molecule type" value="Genomic_DNA"/>
</dbReference>
<dbReference type="EMBL" id="EU088940">
    <property type="protein sequence ID" value="ABW78225.1"/>
    <property type="molecule type" value="Genomic_DNA"/>
</dbReference>
<dbReference type="EMBL" id="EU088941">
    <property type="protein sequence ID" value="ABW78226.1"/>
    <property type="molecule type" value="Genomic_DNA"/>
</dbReference>
<dbReference type="EMBL" id="EU088942">
    <property type="protein sequence ID" value="ABW78227.1"/>
    <property type="molecule type" value="Genomic_DNA"/>
</dbReference>
<dbReference type="EMBL" id="EU088943">
    <property type="protein sequence ID" value="ABW78228.1"/>
    <property type="molecule type" value="Genomic_DNA"/>
</dbReference>
<dbReference type="EMBL" id="EU088944">
    <property type="protein sequence ID" value="ABW78229.1"/>
    <property type="molecule type" value="Genomic_DNA"/>
</dbReference>
<dbReference type="EMBL" id="EU088945">
    <property type="protein sequence ID" value="ABW78230.1"/>
    <property type="molecule type" value="Genomic_DNA"/>
</dbReference>
<dbReference type="EMBL" id="EU088946">
    <property type="protein sequence ID" value="ABW78231.1"/>
    <property type="molecule type" value="Genomic_DNA"/>
</dbReference>
<dbReference type="EMBL" id="EU088947">
    <property type="protein sequence ID" value="ABW78232.1"/>
    <property type="molecule type" value="Genomic_DNA"/>
</dbReference>
<dbReference type="EMBL" id="EU088948">
    <property type="protein sequence ID" value="ABW78233.1"/>
    <property type="molecule type" value="Genomic_DNA"/>
</dbReference>
<dbReference type="EMBL" id="EU088949">
    <property type="protein sequence ID" value="ABW78234.1"/>
    <property type="molecule type" value="Genomic_DNA"/>
</dbReference>
<dbReference type="EMBL" id="EU088950">
    <property type="protein sequence ID" value="ABW78235.1"/>
    <property type="molecule type" value="Genomic_DNA"/>
</dbReference>
<dbReference type="EMBL" id="EU088951">
    <property type="protein sequence ID" value="ABW78236.1"/>
    <property type="molecule type" value="Genomic_DNA"/>
</dbReference>
<dbReference type="EMBL" id="EU088952">
    <property type="protein sequence ID" value="ABW78237.1"/>
    <property type="molecule type" value="Genomic_DNA"/>
</dbReference>
<dbReference type="EMBL" id="EU088953">
    <property type="protein sequence ID" value="ABW78238.1"/>
    <property type="molecule type" value="Genomic_DNA"/>
</dbReference>
<dbReference type="EMBL" id="EU088954">
    <property type="protein sequence ID" value="ABW78239.1"/>
    <property type="molecule type" value="Genomic_DNA"/>
</dbReference>
<dbReference type="EMBL" id="EU088955">
    <property type="protein sequence ID" value="ABW78240.1"/>
    <property type="molecule type" value="Genomic_DNA"/>
</dbReference>
<dbReference type="EMBL" id="EU088956">
    <property type="protein sequence ID" value="ABW78241.1"/>
    <property type="molecule type" value="Genomic_DNA"/>
</dbReference>
<dbReference type="EMBL" id="EU088957">
    <property type="protein sequence ID" value="ABW78242.1"/>
    <property type="molecule type" value="Genomic_DNA"/>
</dbReference>
<dbReference type="EMBL" id="EU088958">
    <property type="protein sequence ID" value="ABW78243.1"/>
    <property type="molecule type" value="Genomic_DNA"/>
</dbReference>
<dbReference type="EMBL" id="EU088959">
    <property type="protein sequence ID" value="ABW78244.1"/>
    <property type="molecule type" value="Genomic_DNA"/>
</dbReference>
<dbReference type="EMBL" id="EU088960">
    <property type="protein sequence ID" value="ABW78245.1"/>
    <property type="molecule type" value="Genomic_DNA"/>
</dbReference>
<dbReference type="EMBL" id="EU088961">
    <property type="protein sequence ID" value="ABW78246.1"/>
    <property type="molecule type" value="Genomic_DNA"/>
</dbReference>
<dbReference type="EMBL" id="EU088962">
    <property type="protein sequence ID" value="ABW78247.1"/>
    <property type="molecule type" value="Genomic_DNA"/>
</dbReference>
<dbReference type="EMBL" id="EU088963">
    <property type="protein sequence ID" value="ABW78248.1"/>
    <property type="molecule type" value="Genomic_DNA"/>
</dbReference>
<dbReference type="EMBL" id="EU088964">
    <property type="protein sequence ID" value="ABW78249.1"/>
    <property type="molecule type" value="Genomic_DNA"/>
</dbReference>
<dbReference type="EMBL" id="EU088965">
    <property type="protein sequence ID" value="ABW78250.1"/>
    <property type="molecule type" value="Genomic_DNA"/>
</dbReference>
<dbReference type="EMBL" id="EU088966">
    <property type="protein sequence ID" value="ABW78251.1"/>
    <property type="molecule type" value="Genomic_DNA"/>
</dbReference>
<dbReference type="EMBL" id="EU088967">
    <property type="protein sequence ID" value="ABW78252.1"/>
    <property type="molecule type" value="Genomic_DNA"/>
</dbReference>
<dbReference type="EMBL" id="EU088968">
    <property type="protein sequence ID" value="ABW78253.1"/>
    <property type="molecule type" value="Genomic_DNA"/>
</dbReference>
<dbReference type="EMBL" id="EU088969">
    <property type="protein sequence ID" value="ABW78254.1"/>
    <property type="molecule type" value="Genomic_DNA"/>
</dbReference>
<dbReference type="EMBL" id="EU088970">
    <property type="protein sequence ID" value="ABW78255.1"/>
    <property type="molecule type" value="Genomic_DNA"/>
</dbReference>
<dbReference type="EMBL" id="EU088971">
    <property type="protein sequence ID" value="ABW78256.1"/>
    <property type="molecule type" value="Genomic_DNA"/>
</dbReference>
<dbReference type="EMBL" id="EU088972">
    <property type="protein sequence ID" value="ABW78257.1"/>
    <property type="molecule type" value="Genomic_DNA"/>
</dbReference>
<dbReference type="EMBL" id="EU088973">
    <property type="protein sequence ID" value="ABW78258.1"/>
    <property type="molecule type" value="Genomic_DNA"/>
</dbReference>
<dbReference type="EMBL" id="EU088974">
    <property type="protein sequence ID" value="ABW78259.1"/>
    <property type="molecule type" value="Genomic_DNA"/>
</dbReference>
<dbReference type="EMBL" id="EU088975">
    <property type="protein sequence ID" value="ABW78260.1"/>
    <property type="molecule type" value="Genomic_DNA"/>
</dbReference>
<dbReference type="EMBL" id="EU088976">
    <property type="protein sequence ID" value="ABW78261.1"/>
    <property type="molecule type" value="Genomic_DNA"/>
</dbReference>
<dbReference type="EMBL" id="EU088977">
    <property type="protein sequence ID" value="ABW78262.1"/>
    <property type="molecule type" value="Genomic_DNA"/>
</dbReference>
<dbReference type="EMBL" id="EU088978">
    <property type="protein sequence ID" value="ABW78263.1"/>
    <property type="molecule type" value="Genomic_DNA"/>
</dbReference>
<dbReference type="EMBL" id="EU088979">
    <property type="protein sequence ID" value="ABW78264.1"/>
    <property type="molecule type" value="Genomic_DNA"/>
</dbReference>
<dbReference type="EMBL" id="EU088980">
    <property type="protein sequence ID" value="ABW78265.1"/>
    <property type="molecule type" value="Genomic_DNA"/>
</dbReference>
<dbReference type="EMBL" id="EU088981">
    <property type="protein sequence ID" value="ABW78266.1"/>
    <property type="molecule type" value="Genomic_DNA"/>
</dbReference>
<dbReference type="EMBL" id="EU088982">
    <property type="protein sequence ID" value="ABW78267.1"/>
    <property type="molecule type" value="Genomic_DNA"/>
</dbReference>
<dbReference type="EMBL" id="EU088983">
    <property type="protein sequence ID" value="ABW78268.1"/>
    <property type="molecule type" value="Genomic_DNA"/>
</dbReference>
<dbReference type="EMBL" id="EU088984">
    <property type="protein sequence ID" value="ABW78269.1"/>
    <property type="molecule type" value="Genomic_DNA"/>
</dbReference>
<dbReference type="EMBL" id="EU088985">
    <property type="protein sequence ID" value="ABW78270.1"/>
    <property type="molecule type" value="Genomic_DNA"/>
</dbReference>
<dbReference type="EMBL" id="EU088986">
    <property type="protein sequence ID" value="ABW78271.1"/>
    <property type="molecule type" value="Genomic_DNA"/>
</dbReference>
<dbReference type="EMBL" id="EU088987">
    <property type="protein sequence ID" value="ABW78272.1"/>
    <property type="molecule type" value="Genomic_DNA"/>
</dbReference>
<dbReference type="EMBL" id="EU088988">
    <property type="protein sequence ID" value="ABW78273.1"/>
    <property type="molecule type" value="Genomic_DNA"/>
</dbReference>
<dbReference type="EMBL" id="EU088989">
    <property type="protein sequence ID" value="ABW78274.1"/>
    <property type="molecule type" value="Genomic_DNA"/>
</dbReference>
<dbReference type="EMBL" id="EU088990">
    <property type="protein sequence ID" value="ABW78275.1"/>
    <property type="molecule type" value="Genomic_DNA"/>
</dbReference>
<dbReference type="EMBL" id="EU088991">
    <property type="protein sequence ID" value="ABW78276.1"/>
    <property type="molecule type" value="Genomic_DNA"/>
</dbReference>
<dbReference type="EMBL" id="EU088992">
    <property type="protein sequence ID" value="ABW78277.1"/>
    <property type="molecule type" value="Genomic_DNA"/>
</dbReference>
<dbReference type="EMBL" id="EU088993">
    <property type="protein sequence ID" value="ABW78278.1"/>
    <property type="molecule type" value="Genomic_DNA"/>
</dbReference>
<dbReference type="EMBL" id="EU088994">
    <property type="protein sequence ID" value="ABW78279.1"/>
    <property type="molecule type" value="Genomic_DNA"/>
</dbReference>
<dbReference type="EMBL" id="EU088995">
    <property type="protein sequence ID" value="ABW78280.1"/>
    <property type="molecule type" value="Genomic_DNA"/>
</dbReference>
<dbReference type="EMBL" id="EU088996">
    <property type="protein sequence ID" value="ABW78281.1"/>
    <property type="molecule type" value="Genomic_DNA"/>
</dbReference>
<dbReference type="EMBL" id="EU088997">
    <property type="protein sequence ID" value="ABW78282.1"/>
    <property type="molecule type" value="Genomic_DNA"/>
</dbReference>
<dbReference type="EMBL" id="EU088998">
    <property type="protein sequence ID" value="ABW78283.1"/>
    <property type="molecule type" value="Genomic_DNA"/>
</dbReference>
<dbReference type="EMBL" id="EU088999">
    <property type="protein sequence ID" value="ABW78284.1"/>
    <property type="molecule type" value="Genomic_DNA"/>
</dbReference>
<dbReference type="EMBL" id="EU089000">
    <property type="protein sequence ID" value="ABW78285.1"/>
    <property type="molecule type" value="Genomic_DNA"/>
</dbReference>
<dbReference type="EMBL" id="EU089001">
    <property type="protein sequence ID" value="ABW78286.1"/>
    <property type="molecule type" value="Genomic_DNA"/>
</dbReference>
<dbReference type="EMBL" id="EU089002">
    <property type="protein sequence ID" value="ABW78287.1"/>
    <property type="molecule type" value="Genomic_DNA"/>
</dbReference>
<dbReference type="EMBL" id="EU089003">
    <property type="protein sequence ID" value="ABW78288.1"/>
    <property type="molecule type" value="Genomic_DNA"/>
</dbReference>
<dbReference type="EMBL" id="EU089004">
    <property type="protein sequence ID" value="ABW78289.1"/>
    <property type="molecule type" value="Genomic_DNA"/>
</dbReference>
<dbReference type="EMBL" id="EU089005">
    <property type="protein sequence ID" value="ABW78290.1"/>
    <property type="molecule type" value="Genomic_DNA"/>
</dbReference>
<dbReference type="EMBL" id="EU089006">
    <property type="protein sequence ID" value="ABW78291.1"/>
    <property type="molecule type" value="Genomic_DNA"/>
</dbReference>
<dbReference type="EMBL" id="EU089007">
    <property type="protein sequence ID" value="ABW78292.1"/>
    <property type="molecule type" value="Genomic_DNA"/>
</dbReference>
<dbReference type="EMBL" id="EU089008">
    <property type="protein sequence ID" value="ABW78293.1"/>
    <property type="molecule type" value="Genomic_DNA"/>
</dbReference>
<dbReference type="EMBL" id="EU089009">
    <property type="protein sequence ID" value="ABW78294.1"/>
    <property type="molecule type" value="Genomic_DNA"/>
</dbReference>
<dbReference type="EMBL" id="EU089010">
    <property type="protein sequence ID" value="ABW78295.1"/>
    <property type="molecule type" value="Genomic_DNA"/>
</dbReference>
<dbReference type="EMBL" id="EU089011">
    <property type="protein sequence ID" value="ABW78296.1"/>
    <property type="molecule type" value="Genomic_DNA"/>
</dbReference>
<dbReference type="EMBL" id="EU089012">
    <property type="protein sequence ID" value="ABW78297.1"/>
    <property type="molecule type" value="Genomic_DNA"/>
</dbReference>
<dbReference type="EMBL" id="EU089013">
    <property type="protein sequence ID" value="ABW78298.1"/>
    <property type="molecule type" value="Genomic_DNA"/>
</dbReference>
<dbReference type="EMBL" id="EU089014">
    <property type="protein sequence ID" value="ABW78299.1"/>
    <property type="molecule type" value="Genomic_DNA"/>
</dbReference>
<dbReference type="EMBL" id="EU089015">
    <property type="protein sequence ID" value="ABW78300.1"/>
    <property type="molecule type" value="Genomic_DNA"/>
</dbReference>
<dbReference type="EMBL" id="EU089016">
    <property type="protein sequence ID" value="ABW78301.1"/>
    <property type="molecule type" value="Genomic_DNA"/>
</dbReference>
<dbReference type="EMBL" id="EU089017">
    <property type="protein sequence ID" value="ABW78302.1"/>
    <property type="molecule type" value="Genomic_DNA"/>
</dbReference>
<dbReference type="EMBL" id="EU089018">
    <property type="protein sequence ID" value="ABW78303.1"/>
    <property type="molecule type" value="Genomic_DNA"/>
</dbReference>
<dbReference type="EMBL" id="EU089019">
    <property type="protein sequence ID" value="ABW78304.1"/>
    <property type="molecule type" value="Genomic_DNA"/>
</dbReference>
<dbReference type="EMBL" id="EU089020">
    <property type="protein sequence ID" value="ABW78305.1"/>
    <property type="molecule type" value="Genomic_DNA"/>
</dbReference>
<dbReference type="EMBL" id="EU089021">
    <property type="protein sequence ID" value="ABW78306.1"/>
    <property type="molecule type" value="Genomic_DNA"/>
</dbReference>
<dbReference type="EMBL" id="EU089022">
    <property type="protein sequence ID" value="ABW78307.1"/>
    <property type="molecule type" value="Genomic_DNA"/>
</dbReference>
<dbReference type="EMBL" id="EU089023">
    <property type="protein sequence ID" value="ABW78308.1"/>
    <property type="molecule type" value="Genomic_DNA"/>
</dbReference>
<dbReference type="EMBL" id="EU089024">
    <property type="protein sequence ID" value="ABW78309.1"/>
    <property type="molecule type" value="Genomic_DNA"/>
</dbReference>
<dbReference type="EMBL" id="EU089025">
    <property type="protein sequence ID" value="ABW78310.1"/>
    <property type="molecule type" value="Genomic_DNA"/>
</dbReference>
<dbReference type="EMBL" id="EU089026">
    <property type="protein sequence ID" value="ABW78311.1"/>
    <property type="molecule type" value="Genomic_DNA"/>
</dbReference>
<dbReference type="EMBL" id="EU089027">
    <property type="protein sequence ID" value="ABW78312.1"/>
    <property type="molecule type" value="Genomic_DNA"/>
</dbReference>
<dbReference type="EMBL" id="EU089028">
    <property type="protein sequence ID" value="ABW78313.1"/>
    <property type="molecule type" value="Genomic_DNA"/>
</dbReference>
<dbReference type="EMBL" id="EU089029">
    <property type="protein sequence ID" value="ABW78314.1"/>
    <property type="molecule type" value="Genomic_DNA"/>
</dbReference>
<dbReference type="EMBL" id="EU089030">
    <property type="protein sequence ID" value="ABW78315.1"/>
    <property type="molecule type" value="Genomic_DNA"/>
</dbReference>
<dbReference type="EMBL" id="EU089031">
    <property type="protein sequence ID" value="ABW78316.1"/>
    <property type="molecule type" value="Genomic_DNA"/>
</dbReference>
<dbReference type="EMBL" id="EU089032">
    <property type="protein sequence ID" value="ABW78317.1"/>
    <property type="molecule type" value="Genomic_DNA"/>
</dbReference>
<dbReference type="EMBL" id="EU089033">
    <property type="protein sequence ID" value="ABW78318.1"/>
    <property type="molecule type" value="Genomic_DNA"/>
</dbReference>
<dbReference type="EMBL" id="EU089034">
    <property type="protein sequence ID" value="ABW78319.1"/>
    <property type="molecule type" value="Genomic_DNA"/>
</dbReference>
<dbReference type="EMBL" id="EU089035">
    <property type="protein sequence ID" value="ABW78320.1"/>
    <property type="molecule type" value="Genomic_DNA"/>
</dbReference>
<dbReference type="EMBL" id="EU089036">
    <property type="protein sequence ID" value="ABW78321.1"/>
    <property type="molecule type" value="Genomic_DNA"/>
</dbReference>
<dbReference type="EMBL" id="EU089037">
    <property type="protein sequence ID" value="ABW78322.1"/>
    <property type="molecule type" value="Genomic_DNA"/>
</dbReference>
<dbReference type="EMBL" id="EU089038">
    <property type="protein sequence ID" value="ABW78323.1"/>
    <property type="molecule type" value="Genomic_DNA"/>
</dbReference>
<dbReference type="EMBL" id="EU089039">
    <property type="protein sequence ID" value="ABW78324.1"/>
    <property type="molecule type" value="Genomic_DNA"/>
</dbReference>
<dbReference type="EMBL" id="EU089040">
    <property type="protein sequence ID" value="ABW78325.1"/>
    <property type="molecule type" value="Genomic_DNA"/>
</dbReference>
<dbReference type="EMBL" id="EU089041">
    <property type="protein sequence ID" value="ABW78326.1"/>
    <property type="molecule type" value="Genomic_DNA"/>
</dbReference>
<dbReference type="EMBL" id="EU089042">
    <property type="protein sequence ID" value="ABW78327.1"/>
    <property type="molecule type" value="Genomic_DNA"/>
</dbReference>
<dbReference type="EMBL" id="EU089043">
    <property type="protein sequence ID" value="ABW78328.1"/>
    <property type="molecule type" value="Genomic_DNA"/>
</dbReference>
<dbReference type="EMBL" id="EU089044">
    <property type="protein sequence ID" value="ABW78329.1"/>
    <property type="molecule type" value="Genomic_DNA"/>
</dbReference>
<dbReference type="EMBL" id="EU089045">
    <property type="protein sequence ID" value="ABW78330.1"/>
    <property type="molecule type" value="Genomic_DNA"/>
</dbReference>
<dbReference type="EMBL" id="EU089046">
    <property type="protein sequence ID" value="ABW78331.1"/>
    <property type="molecule type" value="Genomic_DNA"/>
</dbReference>
<dbReference type="EMBL" id="EU089047">
    <property type="protein sequence ID" value="ABW78332.1"/>
    <property type="molecule type" value="Genomic_DNA"/>
</dbReference>
<dbReference type="EMBL" id="EU089048">
    <property type="protein sequence ID" value="ABW78333.1"/>
    <property type="molecule type" value="Genomic_DNA"/>
</dbReference>
<dbReference type="EMBL" id="EU089049">
    <property type="protein sequence ID" value="ABW78334.1"/>
    <property type="molecule type" value="Genomic_DNA"/>
</dbReference>
<dbReference type="EMBL" id="EU089050">
    <property type="protein sequence ID" value="ABW78335.1"/>
    <property type="molecule type" value="Genomic_DNA"/>
</dbReference>
<dbReference type="EMBL" id="EU089051">
    <property type="protein sequence ID" value="ABW78336.1"/>
    <property type="molecule type" value="Genomic_DNA"/>
</dbReference>
<dbReference type="EMBL" id="EU089052">
    <property type="protein sequence ID" value="ABW78337.1"/>
    <property type="molecule type" value="Genomic_DNA"/>
</dbReference>
<dbReference type="EMBL" id="EU089053">
    <property type="protein sequence ID" value="ABW78338.1"/>
    <property type="molecule type" value="Genomic_DNA"/>
</dbReference>
<dbReference type="EMBL" id="EU089054">
    <property type="protein sequence ID" value="ABW78339.1"/>
    <property type="molecule type" value="Genomic_DNA"/>
</dbReference>
<dbReference type="EMBL" id="EU089055">
    <property type="protein sequence ID" value="ABW78340.1"/>
    <property type="molecule type" value="Genomic_DNA"/>
</dbReference>
<dbReference type="EMBL" id="EU089056">
    <property type="protein sequence ID" value="ABW78341.1"/>
    <property type="molecule type" value="Genomic_DNA"/>
</dbReference>
<dbReference type="EMBL" id="EU089057">
    <property type="protein sequence ID" value="ABW78342.1"/>
    <property type="molecule type" value="Genomic_DNA"/>
</dbReference>
<dbReference type="EMBL" id="EU089058">
    <property type="protein sequence ID" value="ABW78343.1"/>
    <property type="molecule type" value="Genomic_DNA"/>
</dbReference>
<dbReference type="EMBL" id="EU089059">
    <property type="protein sequence ID" value="ABW78344.1"/>
    <property type="molecule type" value="Genomic_DNA"/>
</dbReference>
<dbReference type="EMBL" id="EU089060">
    <property type="protein sequence ID" value="ABW78345.1"/>
    <property type="molecule type" value="Genomic_DNA"/>
</dbReference>
<dbReference type="EMBL" id="EU089061">
    <property type="protein sequence ID" value="ABW78346.1"/>
    <property type="molecule type" value="Genomic_DNA"/>
</dbReference>
<dbReference type="EMBL" id="EU089062">
    <property type="protein sequence ID" value="ABW78347.1"/>
    <property type="molecule type" value="Genomic_DNA"/>
</dbReference>
<dbReference type="EMBL" id="EU089063">
    <property type="protein sequence ID" value="ABW78348.1"/>
    <property type="molecule type" value="Genomic_DNA"/>
</dbReference>
<dbReference type="EMBL" id="EU089064">
    <property type="protein sequence ID" value="ABW78349.1"/>
    <property type="molecule type" value="Genomic_DNA"/>
</dbReference>
<dbReference type="EMBL" id="EU089065">
    <property type="protein sequence ID" value="ABW78350.1"/>
    <property type="molecule type" value="Genomic_DNA"/>
</dbReference>
<dbReference type="EMBL" id="EU089066">
    <property type="protein sequence ID" value="ABW78351.1"/>
    <property type="molecule type" value="Genomic_DNA"/>
</dbReference>
<dbReference type="EMBL" id="EU089067">
    <property type="protein sequence ID" value="ABW78352.1"/>
    <property type="molecule type" value="Genomic_DNA"/>
</dbReference>
<dbReference type="EMBL" id="EU089068">
    <property type="protein sequence ID" value="ABW78353.1"/>
    <property type="molecule type" value="Genomic_DNA"/>
</dbReference>
<dbReference type="EMBL" id="EU089069">
    <property type="protein sequence ID" value="ABW78354.1"/>
    <property type="molecule type" value="Genomic_DNA"/>
</dbReference>
<dbReference type="EMBL" id="AE014297">
    <property type="protein sequence ID" value="AAF56912.2"/>
    <property type="molecule type" value="Genomic_DNA"/>
</dbReference>
<dbReference type="EMBL" id="AY113625">
    <property type="protein sequence ID" value="AAM29630.1"/>
    <property type="molecule type" value="mRNA"/>
</dbReference>
<dbReference type="RefSeq" id="NP_001287586.1">
    <property type="nucleotide sequence ID" value="NM_001300657.1"/>
</dbReference>
<dbReference type="RefSeq" id="NP_651707.1">
    <property type="nucleotide sequence ID" value="NM_143450.3"/>
</dbReference>
<dbReference type="SMR" id="Q9VAJ4"/>
<dbReference type="BioGRID" id="68352">
    <property type="interactions" value="1"/>
</dbReference>
<dbReference type="FunCoup" id="Q9VAJ4">
    <property type="interactions" value="1"/>
</dbReference>
<dbReference type="IntAct" id="Q9VAJ4">
    <property type="interactions" value="1"/>
</dbReference>
<dbReference type="STRING" id="7227.FBpp0084816"/>
<dbReference type="PaxDb" id="7227-FBpp0084816"/>
<dbReference type="EnsemblMetazoa" id="FBtr0085450">
    <property type="protein sequence ID" value="FBpp0084816"/>
    <property type="gene ID" value="FBgn0039678"/>
</dbReference>
<dbReference type="EnsemblMetazoa" id="FBtr0339147">
    <property type="protein sequence ID" value="FBpp0308292"/>
    <property type="gene ID" value="FBgn0039678"/>
</dbReference>
<dbReference type="GeneID" id="43488"/>
<dbReference type="KEGG" id="dme:Dmel_CG18111"/>
<dbReference type="AGR" id="FB:FBgn0039678"/>
<dbReference type="CTD" id="43488"/>
<dbReference type="FlyBase" id="FBgn0039678">
    <property type="gene designation" value="Obp99a"/>
</dbReference>
<dbReference type="VEuPathDB" id="VectorBase:FBgn0039678"/>
<dbReference type="eggNOG" id="ENOG502TCT6">
    <property type="taxonomic scope" value="Eukaryota"/>
</dbReference>
<dbReference type="GeneTree" id="ENSGT00390000004379"/>
<dbReference type="HOGENOM" id="CLU_144993_1_0_1"/>
<dbReference type="InParanoid" id="Q9VAJ4"/>
<dbReference type="OMA" id="NACEWAW"/>
<dbReference type="OrthoDB" id="5978988at2759"/>
<dbReference type="PhylomeDB" id="Q9VAJ4"/>
<dbReference type="BioGRID-ORCS" id="43488">
    <property type="hits" value="0 hits in 1 CRISPR screen"/>
</dbReference>
<dbReference type="GenomeRNAi" id="43488"/>
<dbReference type="PRO" id="PR:Q9VAJ4"/>
<dbReference type="Proteomes" id="UP000000803">
    <property type="component" value="Chromosome 3R"/>
</dbReference>
<dbReference type="Bgee" id="FBgn0039678">
    <property type="expression patterns" value="Expressed in early elongation stage spermatid (Drosophila) in testis and 87 other cell types or tissues"/>
</dbReference>
<dbReference type="ExpressionAtlas" id="Q9VAJ4">
    <property type="expression patterns" value="baseline and differential"/>
</dbReference>
<dbReference type="GO" id="GO:0012505">
    <property type="term" value="C:endomembrane system"/>
    <property type="evidence" value="ECO:0007005"/>
    <property type="project" value="FlyBase"/>
</dbReference>
<dbReference type="GO" id="GO:0005576">
    <property type="term" value="C:extracellular region"/>
    <property type="evidence" value="ECO:0000250"/>
    <property type="project" value="UniProtKB"/>
</dbReference>
<dbReference type="GO" id="GO:0005615">
    <property type="term" value="C:extracellular space"/>
    <property type="evidence" value="ECO:0000318"/>
    <property type="project" value="GO_Central"/>
</dbReference>
<dbReference type="GO" id="GO:0005549">
    <property type="term" value="F:odorant binding"/>
    <property type="evidence" value="ECO:0000250"/>
    <property type="project" value="FlyBase"/>
</dbReference>
<dbReference type="GO" id="GO:0042048">
    <property type="term" value="P:olfactory behavior"/>
    <property type="evidence" value="ECO:0000250"/>
    <property type="project" value="UniProtKB"/>
</dbReference>
<dbReference type="GO" id="GO:0019236">
    <property type="term" value="P:response to pheromone"/>
    <property type="evidence" value="ECO:0000250"/>
    <property type="project" value="UniProtKB"/>
</dbReference>
<dbReference type="GO" id="GO:0007606">
    <property type="term" value="P:sensory perception of chemical stimulus"/>
    <property type="evidence" value="ECO:0000250"/>
    <property type="project" value="FlyBase"/>
</dbReference>
<dbReference type="GO" id="GO:0007608">
    <property type="term" value="P:sensory perception of smell"/>
    <property type="evidence" value="ECO:0000318"/>
    <property type="project" value="GO_Central"/>
</dbReference>
<dbReference type="CDD" id="cd23992">
    <property type="entry name" value="PBP_GOBP"/>
    <property type="match status" value="1"/>
</dbReference>
<dbReference type="FunFam" id="1.10.238.20:FF:000005">
    <property type="entry name" value="Odorant-binding protein 99a"/>
    <property type="match status" value="1"/>
</dbReference>
<dbReference type="Gene3D" id="1.10.238.20">
    <property type="entry name" value="Pheromone/general odorant binding protein domain"/>
    <property type="match status" value="1"/>
</dbReference>
<dbReference type="InterPro" id="IPR006170">
    <property type="entry name" value="PBP/GOBP"/>
</dbReference>
<dbReference type="InterPro" id="IPR036728">
    <property type="entry name" value="PBP_GOBP_sf"/>
</dbReference>
<dbReference type="PANTHER" id="PTHR11857:SF46">
    <property type="entry name" value="GENERAL ODORANT-BINDING PROTEIN 99A-RELATED"/>
    <property type="match status" value="1"/>
</dbReference>
<dbReference type="PANTHER" id="PTHR11857">
    <property type="entry name" value="ODORANT BINDING PROTEIN-RELATED"/>
    <property type="match status" value="1"/>
</dbReference>
<dbReference type="Pfam" id="PF01395">
    <property type="entry name" value="PBP_GOBP"/>
    <property type="match status" value="1"/>
</dbReference>
<dbReference type="SMART" id="SM00708">
    <property type="entry name" value="PhBP"/>
    <property type="match status" value="1"/>
</dbReference>
<dbReference type="SUPFAM" id="SSF47565">
    <property type="entry name" value="Insect pheromone/odorant-binding proteins"/>
    <property type="match status" value="1"/>
</dbReference>
<protein>
    <recommendedName>
        <fullName>General odorant-binding protein 99a</fullName>
    </recommendedName>
</protein>
<gene>
    <name type="primary">Obp99a</name>
    <name type="ORF">CG18111</name>
</gene>
<reference key="1">
    <citation type="journal article" date="2007" name="Genetics">
        <title>Association of polymorphisms in odorant-binding protein genes with variation in olfactory response to benzaldehyde in Drosophila.</title>
        <authorList>
            <person name="Wang P."/>
            <person name="Lyman R.F."/>
            <person name="Shabalina S.A."/>
            <person name="Mackay T.F.C."/>
            <person name="Anholt R.R.H."/>
        </authorList>
    </citation>
    <scope>NUCLEOTIDE SEQUENCE [GENOMIC DNA]</scope>
    <scope>VARIANTS ARG-49 AND GLY-139</scope>
    <source>
        <strain>100A</strain>
        <strain>101A</strain>
        <strain>105A</strain>
        <strain>109A</strain>
        <strain>10A</strain>
        <strain>136A</strain>
        <strain>149A</strain>
        <strain>158A</strain>
        <strain>176A</strain>
        <strain>177A</strain>
        <strain>189A</strain>
        <strain>195A</strain>
        <strain>208A</strain>
        <strain>210A</strain>
        <strain>217A</strain>
        <strain>21A</strain>
        <strain>223A</strain>
        <strain>227A</strain>
        <strain>229A</strain>
        <strain>233A</strain>
        <strain>235A</strain>
        <strain>237A</strain>
        <strain>239A</strain>
        <strain>23A</strain>
        <strain>256A</strain>
        <strain>272A</strain>
        <strain>280A</strain>
        <strain>287A</strain>
        <strain>28A</strain>
        <strain>301A</strain>
        <strain>303A</strain>
        <strain>304A</strain>
        <strain>306A</strain>
        <strain>307A</strain>
        <strain>309A</strain>
        <strain>312A</strain>
        <strain>313A</strain>
        <strain>315A</strain>
        <strain>318A</strain>
        <strain>319A</strain>
        <strain>322A</strain>
        <strain>324A</strain>
        <strain>325A</strain>
        <strain>32A</strain>
        <strain>331A</strain>
        <strain>332A</strain>
        <strain>335A</strain>
        <strain>336A</strain>
        <strain>338A</strain>
        <strain>340A</strain>
        <strain>346A</strain>
        <strain>348A</strain>
        <strain>350A</strain>
        <strain>352A</strain>
        <strain>354A</strain>
        <strain>355A</strain>
        <strain>356A</strain>
        <strain>357A</strain>
        <strain>358A</strain>
        <strain>359A</strain>
        <strain>360A</strain>
        <strain>361A</strain>
        <strain>362A</strain>
        <strain>365A</strain>
        <strain>366A</strain>
        <strain>367A</strain>
        <strain>371A</strain>
        <strain>375A</strain>
        <strain>379A</strain>
        <strain>380A</strain>
        <strain>383A</strain>
        <strain>385A</strain>
        <strain>386A</strain>
        <strain>387A</strain>
        <strain>38A</strain>
        <strain>390A</strain>
        <strain>393A</strain>
        <strain>395A</strain>
        <strain>397A</strain>
        <strain>398A</strain>
        <strain>399A</strain>
        <strain>405A</strain>
        <strain>409A</strain>
        <strain>40A</strain>
        <strain>41A</strain>
        <strain>426A</strain>
        <strain>42A</strain>
        <strain>440A</strain>
        <strain>443A</strain>
        <strain>449A</strain>
        <strain>453A</strain>
        <strain>456A</strain>
        <strain>461A</strain>
        <strain>482A</strain>
        <strain>486A</strain>
        <strain>48A</strain>
        <strain>49A</strain>
        <strain>502A</strain>
        <strain>505A</strain>
        <strain>508A</strain>
        <strain>509A</strain>
        <strain>513A</strain>
        <strain>514A</strain>
        <strain>517A</strain>
        <strain>528A</strain>
        <strain>530A</strain>
        <strain>531A</strain>
        <strain>554A</strain>
        <strain>563A</strain>
        <strain>57A</strain>
        <strain>581A</strain>
        <strain>588A</strain>
        <strain>589A</strain>
        <strain>591A</strain>
        <strain>596A</strain>
        <strain>59A</strain>
        <strain>627A</strain>
        <strain>630A</strain>
        <strain>639A</strain>
        <strain>663A</strain>
        <strain>672A</strain>
        <strain>69A</strain>
        <strain>702A</strain>
        <strain>703A</strain>
        <strain>705A</strain>
        <strain>707A</strain>
        <strain>712A</strain>
        <strain>713A</strain>
        <strain>716A</strain>
        <strain>722A</strain>
        <strain>730A</strain>
        <strain>732A</strain>
        <strain>734A</strain>
        <strain>735A</strain>
        <strain>736A</strain>
        <strain>737A</strain>
        <strain>739A</strain>
        <strain>740A</strain>
        <strain>744A</strain>
        <strain>748A</strain>
        <strain>751A</strain>
        <strain>752A</strain>
        <strain>757A</strain>
        <strain>759A</strain>
        <strain>761A</strain>
        <strain>762A</strain>
        <strain>763A</strain>
        <strain>765A</strain>
        <strain>767A</strain>
        <strain>770A</strain>
        <strain>773A</strain>
        <strain>774A</strain>
        <strain>775A</strain>
        <strain>776A</strain>
        <strain>786A</strain>
        <strain>787A</strain>
        <strain>788A</strain>
        <strain>790A</strain>
        <strain>791A</strain>
        <strain>793A</strain>
        <strain>797A</strain>
        <strain>799A</strain>
        <strain>801A</strain>
        <strain>804A</strain>
        <strain>807A</strain>
        <strain>808A</strain>
        <strain>812A</strain>
        <strain>813A</strain>
        <strain>820A</strain>
        <strain>822A</strain>
        <strain>832A</strain>
        <strain>833A</strain>
        <strain>834A</strain>
        <strain>836A</strain>
        <strain>838A</strain>
        <strain>839A</strain>
        <strain>83A</strain>
        <strain>841A</strain>
        <strain>846A</strain>
        <strain>848A</strain>
        <strain>849A</strain>
        <strain>850A</strain>
        <strain>851A</strain>
        <strain>852A</strain>
        <strain>853A</strain>
        <strain>855A</strain>
        <strain>859A</strain>
        <strain>85A</strain>
        <strain>868A</strain>
        <strain>88A</strain>
        <strain>907A</strain>
        <strain>911A</strain>
        <strain>91A</strain>
    </source>
</reference>
<reference key="2">
    <citation type="journal article" date="2000" name="Science">
        <title>The genome sequence of Drosophila melanogaster.</title>
        <authorList>
            <person name="Adams M.D."/>
            <person name="Celniker S.E."/>
            <person name="Holt R.A."/>
            <person name="Evans C.A."/>
            <person name="Gocayne J.D."/>
            <person name="Amanatides P.G."/>
            <person name="Scherer S.E."/>
            <person name="Li P.W."/>
            <person name="Hoskins R.A."/>
            <person name="Galle R.F."/>
            <person name="George R.A."/>
            <person name="Lewis S.E."/>
            <person name="Richards S."/>
            <person name="Ashburner M."/>
            <person name="Henderson S.N."/>
            <person name="Sutton G.G."/>
            <person name="Wortman J.R."/>
            <person name="Yandell M.D."/>
            <person name="Zhang Q."/>
            <person name="Chen L.X."/>
            <person name="Brandon R.C."/>
            <person name="Rogers Y.-H.C."/>
            <person name="Blazej R.G."/>
            <person name="Champe M."/>
            <person name="Pfeiffer B.D."/>
            <person name="Wan K.H."/>
            <person name="Doyle C."/>
            <person name="Baxter E.G."/>
            <person name="Helt G."/>
            <person name="Nelson C.R."/>
            <person name="Miklos G.L.G."/>
            <person name="Abril J.F."/>
            <person name="Agbayani A."/>
            <person name="An H.-J."/>
            <person name="Andrews-Pfannkoch C."/>
            <person name="Baldwin D."/>
            <person name="Ballew R.M."/>
            <person name="Basu A."/>
            <person name="Baxendale J."/>
            <person name="Bayraktaroglu L."/>
            <person name="Beasley E.M."/>
            <person name="Beeson K.Y."/>
            <person name="Benos P.V."/>
            <person name="Berman B.P."/>
            <person name="Bhandari D."/>
            <person name="Bolshakov S."/>
            <person name="Borkova D."/>
            <person name="Botchan M.R."/>
            <person name="Bouck J."/>
            <person name="Brokstein P."/>
            <person name="Brottier P."/>
            <person name="Burtis K.C."/>
            <person name="Busam D.A."/>
            <person name="Butler H."/>
            <person name="Cadieu E."/>
            <person name="Center A."/>
            <person name="Chandra I."/>
            <person name="Cherry J.M."/>
            <person name="Cawley S."/>
            <person name="Dahlke C."/>
            <person name="Davenport L.B."/>
            <person name="Davies P."/>
            <person name="de Pablos B."/>
            <person name="Delcher A."/>
            <person name="Deng Z."/>
            <person name="Mays A.D."/>
            <person name="Dew I."/>
            <person name="Dietz S.M."/>
            <person name="Dodson K."/>
            <person name="Doup L.E."/>
            <person name="Downes M."/>
            <person name="Dugan-Rocha S."/>
            <person name="Dunkov B.C."/>
            <person name="Dunn P."/>
            <person name="Durbin K.J."/>
            <person name="Evangelista C.C."/>
            <person name="Ferraz C."/>
            <person name="Ferriera S."/>
            <person name="Fleischmann W."/>
            <person name="Fosler C."/>
            <person name="Gabrielian A.E."/>
            <person name="Garg N.S."/>
            <person name="Gelbart W.M."/>
            <person name="Glasser K."/>
            <person name="Glodek A."/>
            <person name="Gong F."/>
            <person name="Gorrell J.H."/>
            <person name="Gu Z."/>
            <person name="Guan P."/>
            <person name="Harris M."/>
            <person name="Harris N.L."/>
            <person name="Harvey D.A."/>
            <person name="Heiman T.J."/>
            <person name="Hernandez J.R."/>
            <person name="Houck J."/>
            <person name="Hostin D."/>
            <person name="Houston K.A."/>
            <person name="Howland T.J."/>
            <person name="Wei M.-H."/>
            <person name="Ibegwam C."/>
            <person name="Jalali M."/>
            <person name="Kalush F."/>
            <person name="Karpen G.H."/>
            <person name="Ke Z."/>
            <person name="Kennison J.A."/>
            <person name="Ketchum K.A."/>
            <person name="Kimmel B.E."/>
            <person name="Kodira C.D."/>
            <person name="Kraft C.L."/>
            <person name="Kravitz S."/>
            <person name="Kulp D."/>
            <person name="Lai Z."/>
            <person name="Lasko P."/>
            <person name="Lei Y."/>
            <person name="Levitsky A.A."/>
            <person name="Li J.H."/>
            <person name="Li Z."/>
            <person name="Liang Y."/>
            <person name="Lin X."/>
            <person name="Liu X."/>
            <person name="Mattei B."/>
            <person name="McIntosh T.C."/>
            <person name="McLeod M.P."/>
            <person name="McPherson D."/>
            <person name="Merkulov G."/>
            <person name="Milshina N.V."/>
            <person name="Mobarry C."/>
            <person name="Morris J."/>
            <person name="Moshrefi A."/>
            <person name="Mount S.M."/>
            <person name="Moy M."/>
            <person name="Murphy B."/>
            <person name="Murphy L."/>
            <person name="Muzny D.M."/>
            <person name="Nelson D.L."/>
            <person name="Nelson D.R."/>
            <person name="Nelson K.A."/>
            <person name="Nixon K."/>
            <person name="Nusskern D.R."/>
            <person name="Pacleb J.M."/>
            <person name="Palazzolo M."/>
            <person name="Pittman G.S."/>
            <person name="Pan S."/>
            <person name="Pollard J."/>
            <person name="Puri V."/>
            <person name="Reese M.G."/>
            <person name="Reinert K."/>
            <person name="Remington K."/>
            <person name="Saunders R.D.C."/>
            <person name="Scheeler F."/>
            <person name="Shen H."/>
            <person name="Shue B.C."/>
            <person name="Siden-Kiamos I."/>
            <person name="Simpson M."/>
            <person name="Skupski M.P."/>
            <person name="Smith T.J."/>
            <person name="Spier E."/>
            <person name="Spradling A.C."/>
            <person name="Stapleton M."/>
            <person name="Strong R."/>
            <person name="Sun E."/>
            <person name="Svirskas R."/>
            <person name="Tector C."/>
            <person name="Turner R."/>
            <person name="Venter E."/>
            <person name="Wang A.H."/>
            <person name="Wang X."/>
            <person name="Wang Z.-Y."/>
            <person name="Wassarman D.A."/>
            <person name="Weinstock G.M."/>
            <person name="Weissenbach J."/>
            <person name="Williams S.M."/>
            <person name="Woodage T."/>
            <person name="Worley K.C."/>
            <person name="Wu D."/>
            <person name="Yang S."/>
            <person name="Yao Q.A."/>
            <person name="Ye J."/>
            <person name="Yeh R.-F."/>
            <person name="Zaveri J.S."/>
            <person name="Zhan M."/>
            <person name="Zhang G."/>
            <person name="Zhao Q."/>
            <person name="Zheng L."/>
            <person name="Zheng X.H."/>
            <person name="Zhong F.N."/>
            <person name="Zhong W."/>
            <person name="Zhou X."/>
            <person name="Zhu S.C."/>
            <person name="Zhu X."/>
            <person name="Smith H.O."/>
            <person name="Gibbs R.A."/>
            <person name="Myers E.W."/>
            <person name="Rubin G.M."/>
            <person name="Venter J.C."/>
        </authorList>
    </citation>
    <scope>NUCLEOTIDE SEQUENCE [LARGE SCALE GENOMIC DNA]</scope>
    <source>
        <strain>Berkeley</strain>
    </source>
</reference>
<reference key="3">
    <citation type="journal article" date="2002" name="Genome Biol.">
        <title>Annotation of the Drosophila melanogaster euchromatic genome: a systematic review.</title>
        <authorList>
            <person name="Misra S."/>
            <person name="Crosby M.A."/>
            <person name="Mungall C.J."/>
            <person name="Matthews B.B."/>
            <person name="Campbell K.S."/>
            <person name="Hradecky P."/>
            <person name="Huang Y."/>
            <person name="Kaminker J.S."/>
            <person name="Millburn G.H."/>
            <person name="Prochnik S.E."/>
            <person name="Smith C.D."/>
            <person name="Tupy J.L."/>
            <person name="Whitfield E.J."/>
            <person name="Bayraktaroglu L."/>
            <person name="Berman B.P."/>
            <person name="Bettencourt B.R."/>
            <person name="Celniker S.E."/>
            <person name="de Grey A.D.N.J."/>
            <person name="Drysdale R.A."/>
            <person name="Harris N.L."/>
            <person name="Richter J."/>
            <person name="Russo S."/>
            <person name="Schroeder A.J."/>
            <person name="Shu S.Q."/>
            <person name="Stapleton M."/>
            <person name="Yamada C."/>
            <person name="Ashburner M."/>
            <person name="Gelbart W.M."/>
            <person name="Rubin G.M."/>
            <person name="Lewis S.E."/>
        </authorList>
    </citation>
    <scope>GENOME REANNOTATION</scope>
    <source>
        <strain>Berkeley</strain>
    </source>
</reference>
<reference key="4">
    <citation type="journal article" date="2002" name="Genome Biol.">
        <title>A Drosophila full-length cDNA resource.</title>
        <authorList>
            <person name="Stapleton M."/>
            <person name="Carlson J.W."/>
            <person name="Brokstein P."/>
            <person name="Yu C."/>
            <person name="Champe M."/>
            <person name="George R.A."/>
            <person name="Guarin H."/>
            <person name="Kronmiller B."/>
            <person name="Pacleb J.M."/>
            <person name="Park S."/>
            <person name="Wan K.H."/>
            <person name="Rubin G.M."/>
            <person name="Celniker S.E."/>
        </authorList>
    </citation>
    <scope>NUCLEOTIDE SEQUENCE [LARGE SCALE MRNA]</scope>
    <source>
        <strain>Berkeley</strain>
        <tissue>Head</tissue>
    </source>
</reference>
<reference key="5">
    <citation type="journal article" date="2001" name="Genetics">
        <title>A large family of divergent Drosophila odorant-binding proteins expressed in gustatory and olfactory sensilla.</title>
        <authorList>
            <person name="Galindo K."/>
            <person name="Smith D.P."/>
        </authorList>
    </citation>
    <scope>IDENTIFICATION</scope>
    <scope>TISSUE SPECIFICITY</scope>
</reference>
<reference key="6">
    <citation type="journal article" date="2003" name="Development">
        <title>Discovery of genes with highly restricted expression patterns in the Drosophila wing disc using DNA oligonucleotide microarrays.</title>
        <authorList>
            <person name="Butler M.J."/>
            <person name="Jacobsen T.L."/>
            <person name="Cain D.M."/>
            <person name="Jarman M.G."/>
            <person name="Hubank M."/>
            <person name="Whittle J.R.S."/>
            <person name="Phillips R."/>
            <person name="Simcox A."/>
        </authorList>
    </citation>
    <scope>TISSUE SPECIFICITY</scope>
</reference>
<sequence>MKVFVAICVLIGLASADYVVKNRHDMLAYRDECVKELAVPVDLVEKYQKWEYPNDAKTQCYIKCVFTKWGLFDVQSGFNVENIHQQLVGNHADHNEAFHASLAACVDKNEQGSNACEWAYRGATCLLKENLAQIQKSLAPKA</sequence>
<evidence type="ECO:0000250" key="1"/>
<evidence type="ECO:0000255" key="2"/>
<evidence type="ECO:0000269" key="3">
    <source>
    </source>
</evidence>
<evidence type="ECO:0000269" key="4">
    <source>
    </source>
</evidence>
<evidence type="ECO:0000269" key="5">
    <source>
    </source>
</evidence>
<evidence type="ECO:0000305" key="6"/>
<proteinExistence type="evidence at transcript level"/>
<feature type="signal peptide" evidence="2">
    <location>
        <begin position="1"/>
        <end position="16"/>
    </location>
</feature>
<feature type="chain" id="PRO_0000012578" description="General odorant-binding protein 99a">
    <location>
        <begin position="17"/>
        <end position="142"/>
    </location>
</feature>
<feature type="disulfide bond" evidence="1">
    <location>
        <begin position="33"/>
        <end position="64"/>
    </location>
</feature>
<feature type="disulfide bond" evidence="1">
    <location>
        <begin position="60"/>
        <end position="116"/>
    </location>
</feature>
<feature type="disulfide bond" evidence="1">
    <location>
        <begin position="105"/>
        <end position="125"/>
    </location>
</feature>
<feature type="sequence variant" description="In strain: 88A, 195A, 217A, 223A, 233A, 256A, 360A, 380A, 482A, 554A, 639A, 716A, 790A, 820A and 855A." evidence="5">
    <original>K</original>
    <variation>R</variation>
    <location>
        <position position="49"/>
    </location>
</feature>
<feature type="sequence variant" description="In strain: 40A, 822A and 832A." evidence="5">
    <original>A</original>
    <variation>G</variation>
    <location>
        <position position="139"/>
    </location>
</feature>
<organism>
    <name type="scientific">Drosophila melanogaster</name>
    <name type="common">Fruit fly</name>
    <dbReference type="NCBI Taxonomy" id="7227"/>
    <lineage>
        <taxon>Eukaryota</taxon>
        <taxon>Metazoa</taxon>
        <taxon>Ecdysozoa</taxon>
        <taxon>Arthropoda</taxon>
        <taxon>Hexapoda</taxon>
        <taxon>Insecta</taxon>
        <taxon>Pterygota</taxon>
        <taxon>Neoptera</taxon>
        <taxon>Endopterygota</taxon>
        <taxon>Diptera</taxon>
        <taxon>Brachycera</taxon>
        <taxon>Muscomorpha</taxon>
        <taxon>Ephydroidea</taxon>
        <taxon>Drosophilidae</taxon>
        <taxon>Drosophila</taxon>
        <taxon>Sophophora</taxon>
    </lineage>
</organism>
<name>OB99A_DROME</name>
<accession>Q9VAJ4</accession>
<accession>A9QIH3</accession>
<accession>A9QII9</accession>
<accession>A9QIJ4</accession>
<accession>A9QIU5</accession>
<comment type="function">
    <text evidence="1">Present in the aqueous fluid surrounding olfactory sensory dendrites and are thought to aid in the capture and transport of hydrophobic odorants into and through this fluid.</text>
</comment>
<comment type="subcellular location">
    <subcellularLocation>
        <location evidence="1">Secreted</location>
    </subcellularLocation>
</comment>
<comment type="tissue specificity">
    <text evidence="3 4">Expressed in larval chemosensory organ. Specifically expressed exclusively in a subset of chemosensory sensilla on the third antennal segment.</text>
</comment>
<comment type="similarity">
    <text evidence="6">Belongs to the PBP/GOBP family.</text>
</comment>